<gene>
    <name evidence="1" type="primary">pth</name>
    <name type="ordered locus">Plut_1203</name>
</gene>
<protein>
    <recommendedName>
        <fullName evidence="1">Peptidyl-tRNA hydrolase</fullName>
        <shortName evidence="1">Pth</shortName>
        <ecNumber evidence="1">3.1.1.29</ecNumber>
    </recommendedName>
</protein>
<organism>
    <name type="scientific">Chlorobium luteolum (strain DSM 273 / BCRC 81028 / 2530)</name>
    <name type="common">Pelodictyon luteolum</name>
    <dbReference type="NCBI Taxonomy" id="319225"/>
    <lineage>
        <taxon>Bacteria</taxon>
        <taxon>Pseudomonadati</taxon>
        <taxon>Chlorobiota</taxon>
        <taxon>Chlorobiia</taxon>
        <taxon>Chlorobiales</taxon>
        <taxon>Chlorobiaceae</taxon>
        <taxon>Chlorobium/Pelodictyon group</taxon>
        <taxon>Pelodictyon</taxon>
    </lineage>
</organism>
<keyword id="KW-0963">Cytoplasm</keyword>
<keyword id="KW-0378">Hydrolase</keyword>
<keyword id="KW-1185">Reference proteome</keyword>
<keyword id="KW-0694">RNA-binding</keyword>
<keyword id="KW-0820">tRNA-binding</keyword>
<sequence length="190" mass="20786">MKLIIGLGNPESRYNNTRHNIGFDLVDSLAAAFGSSFSSGKGKYLAAKITHRQETLMLIKPTTYMNLSGHAVVAAMNFHKVQKNDILVVCDDLNLPSGTMRLRAKGSAGGQNGLKHIIESLGSDEFARLRIGIRLGEMPPGSFSSFVLGKFSAEERVVMDRTLESCREAVLDFAKNGIEHAMNHYNKSAE</sequence>
<dbReference type="EC" id="3.1.1.29" evidence="1"/>
<dbReference type="EMBL" id="CP000096">
    <property type="protein sequence ID" value="ABB24065.1"/>
    <property type="molecule type" value="Genomic_DNA"/>
</dbReference>
<dbReference type="RefSeq" id="WP_011357937.1">
    <property type="nucleotide sequence ID" value="NC_007512.1"/>
</dbReference>
<dbReference type="SMR" id="Q3B3L6"/>
<dbReference type="STRING" id="319225.Plut_1203"/>
<dbReference type="KEGG" id="plt:Plut_1203"/>
<dbReference type="eggNOG" id="COG0193">
    <property type="taxonomic scope" value="Bacteria"/>
</dbReference>
<dbReference type="HOGENOM" id="CLU_062456_4_1_10"/>
<dbReference type="OrthoDB" id="9800507at2"/>
<dbReference type="Proteomes" id="UP000002709">
    <property type="component" value="Chromosome"/>
</dbReference>
<dbReference type="GO" id="GO:0005737">
    <property type="term" value="C:cytoplasm"/>
    <property type="evidence" value="ECO:0007669"/>
    <property type="project" value="UniProtKB-SubCell"/>
</dbReference>
<dbReference type="GO" id="GO:0004045">
    <property type="term" value="F:peptidyl-tRNA hydrolase activity"/>
    <property type="evidence" value="ECO:0007669"/>
    <property type="project" value="UniProtKB-UniRule"/>
</dbReference>
<dbReference type="GO" id="GO:0000049">
    <property type="term" value="F:tRNA binding"/>
    <property type="evidence" value="ECO:0007669"/>
    <property type="project" value="UniProtKB-UniRule"/>
</dbReference>
<dbReference type="GO" id="GO:0006515">
    <property type="term" value="P:protein quality control for misfolded or incompletely synthesized proteins"/>
    <property type="evidence" value="ECO:0007669"/>
    <property type="project" value="UniProtKB-UniRule"/>
</dbReference>
<dbReference type="GO" id="GO:0072344">
    <property type="term" value="P:rescue of stalled ribosome"/>
    <property type="evidence" value="ECO:0007669"/>
    <property type="project" value="UniProtKB-UniRule"/>
</dbReference>
<dbReference type="CDD" id="cd00462">
    <property type="entry name" value="PTH"/>
    <property type="match status" value="1"/>
</dbReference>
<dbReference type="FunFam" id="3.40.50.1470:FF:000001">
    <property type="entry name" value="Peptidyl-tRNA hydrolase"/>
    <property type="match status" value="1"/>
</dbReference>
<dbReference type="Gene3D" id="3.40.50.1470">
    <property type="entry name" value="Peptidyl-tRNA hydrolase"/>
    <property type="match status" value="1"/>
</dbReference>
<dbReference type="HAMAP" id="MF_00083">
    <property type="entry name" value="Pept_tRNA_hydro_bact"/>
    <property type="match status" value="1"/>
</dbReference>
<dbReference type="InterPro" id="IPR001328">
    <property type="entry name" value="Pept_tRNA_hydro"/>
</dbReference>
<dbReference type="InterPro" id="IPR018171">
    <property type="entry name" value="Pept_tRNA_hydro_CS"/>
</dbReference>
<dbReference type="InterPro" id="IPR036416">
    <property type="entry name" value="Pept_tRNA_hydro_sf"/>
</dbReference>
<dbReference type="NCBIfam" id="TIGR00447">
    <property type="entry name" value="pth"/>
    <property type="match status" value="1"/>
</dbReference>
<dbReference type="PANTHER" id="PTHR17224">
    <property type="entry name" value="PEPTIDYL-TRNA HYDROLASE"/>
    <property type="match status" value="1"/>
</dbReference>
<dbReference type="PANTHER" id="PTHR17224:SF1">
    <property type="entry name" value="PEPTIDYL-TRNA HYDROLASE"/>
    <property type="match status" value="1"/>
</dbReference>
<dbReference type="Pfam" id="PF01195">
    <property type="entry name" value="Pept_tRNA_hydro"/>
    <property type="match status" value="1"/>
</dbReference>
<dbReference type="SUPFAM" id="SSF53178">
    <property type="entry name" value="Peptidyl-tRNA hydrolase-like"/>
    <property type="match status" value="1"/>
</dbReference>
<dbReference type="PROSITE" id="PS01195">
    <property type="entry name" value="PEPT_TRNA_HYDROL_1"/>
    <property type="match status" value="1"/>
</dbReference>
<accession>Q3B3L6</accession>
<comment type="function">
    <text evidence="1">Hydrolyzes ribosome-free peptidyl-tRNAs (with 1 or more amino acids incorporated), which drop off the ribosome during protein synthesis, or as a result of ribosome stalling.</text>
</comment>
<comment type="function">
    <text evidence="1">Catalyzes the release of premature peptidyl moieties from peptidyl-tRNA molecules trapped in stalled 50S ribosomal subunits, and thus maintains levels of free tRNAs and 50S ribosomes.</text>
</comment>
<comment type="catalytic activity">
    <reaction evidence="1">
        <text>an N-acyl-L-alpha-aminoacyl-tRNA + H2O = an N-acyl-L-amino acid + a tRNA + H(+)</text>
        <dbReference type="Rhea" id="RHEA:54448"/>
        <dbReference type="Rhea" id="RHEA-COMP:10123"/>
        <dbReference type="Rhea" id="RHEA-COMP:13883"/>
        <dbReference type="ChEBI" id="CHEBI:15377"/>
        <dbReference type="ChEBI" id="CHEBI:15378"/>
        <dbReference type="ChEBI" id="CHEBI:59874"/>
        <dbReference type="ChEBI" id="CHEBI:78442"/>
        <dbReference type="ChEBI" id="CHEBI:138191"/>
        <dbReference type="EC" id="3.1.1.29"/>
    </reaction>
</comment>
<comment type="subunit">
    <text evidence="1">Monomer.</text>
</comment>
<comment type="subcellular location">
    <subcellularLocation>
        <location evidence="1">Cytoplasm</location>
    </subcellularLocation>
</comment>
<comment type="similarity">
    <text evidence="1">Belongs to the PTH family.</text>
</comment>
<reference key="1">
    <citation type="submission" date="2005-08" db="EMBL/GenBank/DDBJ databases">
        <title>Complete sequence of Pelodictyon luteolum DSM 273.</title>
        <authorList>
            <consortium name="US DOE Joint Genome Institute"/>
            <person name="Copeland A."/>
            <person name="Lucas S."/>
            <person name="Lapidus A."/>
            <person name="Barry K."/>
            <person name="Detter J.C."/>
            <person name="Glavina T."/>
            <person name="Hammon N."/>
            <person name="Israni S."/>
            <person name="Pitluck S."/>
            <person name="Bryant D."/>
            <person name="Schmutz J."/>
            <person name="Larimer F."/>
            <person name="Land M."/>
            <person name="Kyrpides N."/>
            <person name="Ivanova N."/>
            <person name="Richardson P."/>
        </authorList>
    </citation>
    <scope>NUCLEOTIDE SEQUENCE [LARGE SCALE GENOMIC DNA]</scope>
    <source>
        <strain>DSM 273 / BCRC 81028 / 2530</strain>
    </source>
</reference>
<feature type="chain" id="PRO_0000264073" description="Peptidyl-tRNA hydrolase">
    <location>
        <begin position="1"/>
        <end position="190"/>
    </location>
</feature>
<feature type="active site" description="Proton acceptor" evidence="1">
    <location>
        <position position="19"/>
    </location>
</feature>
<feature type="binding site" evidence="1">
    <location>
        <position position="14"/>
    </location>
    <ligand>
        <name>tRNA</name>
        <dbReference type="ChEBI" id="CHEBI:17843"/>
    </ligand>
</feature>
<feature type="binding site" evidence="1">
    <location>
        <position position="64"/>
    </location>
    <ligand>
        <name>tRNA</name>
        <dbReference type="ChEBI" id="CHEBI:17843"/>
    </ligand>
</feature>
<feature type="binding site" evidence="1">
    <location>
        <position position="66"/>
    </location>
    <ligand>
        <name>tRNA</name>
        <dbReference type="ChEBI" id="CHEBI:17843"/>
    </ligand>
</feature>
<feature type="binding site" evidence="1">
    <location>
        <position position="112"/>
    </location>
    <ligand>
        <name>tRNA</name>
        <dbReference type="ChEBI" id="CHEBI:17843"/>
    </ligand>
</feature>
<feature type="site" description="Discriminates between blocked and unblocked aminoacyl-tRNA" evidence="1">
    <location>
        <position position="9"/>
    </location>
</feature>
<feature type="site" description="Stabilizes the basic form of H active site to accept a proton" evidence="1">
    <location>
        <position position="91"/>
    </location>
</feature>
<name>PTH_CHLL3</name>
<proteinExistence type="inferred from homology"/>
<evidence type="ECO:0000255" key="1">
    <source>
        <dbReference type="HAMAP-Rule" id="MF_00083"/>
    </source>
</evidence>